<evidence type="ECO:0000250" key="1">
    <source>
        <dbReference type="UniProtKB" id="O15382"/>
    </source>
</evidence>
<evidence type="ECO:0000250" key="2">
    <source>
        <dbReference type="UniProtKB" id="O35854"/>
    </source>
</evidence>
<evidence type="ECO:0000305" key="3"/>
<feature type="transit peptide" description="Mitochondrion" evidence="2">
    <location>
        <begin position="1"/>
        <end position="27"/>
    </location>
</feature>
<feature type="chain" id="PRO_0000236190" description="Branched-chain-amino-acid aminotransferase, mitochondrial">
    <location>
        <begin position="28"/>
        <end position="393"/>
    </location>
</feature>
<feature type="binding site" evidence="1">
    <location>
        <position position="169"/>
    </location>
    <ligand>
        <name>substrate</name>
    </ligand>
</feature>
<feature type="modified residue" description="N6-(pyridoxal phosphate)lysine" evidence="1">
    <location>
        <position position="230"/>
    </location>
</feature>
<feature type="modified residue" description="N6-acetyllysine" evidence="1">
    <location>
        <position position="322"/>
    </location>
</feature>
<feature type="sequence conflict" description="In Ref. 1; ABG67014." evidence="3" ref="1">
    <original>P</original>
    <variation>S</variation>
    <location>
        <position position="288"/>
    </location>
</feature>
<name>BCAT2_BOVIN</name>
<accession>Q5EA40</accession>
<accession>Q0V8P3</accession>
<keyword id="KW-0007">Acetylation</keyword>
<keyword id="KW-0028">Amino-acid biosynthesis</keyword>
<keyword id="KW-0032">Aminotransferase</keyword>
<keyword id="KW-0100">Branched-chain amino acid biosynthesis</keyword>
<keyword id="KW-0443">Lipid metabolism</keyword>
<keyword id="KW-0496">Mitochondrion</keyword>
<keyword id="KW-0663">Pyridoxal phosphate</keyword>
<keyword id="KW-1185">Reference proteome</keyword>
<keyword id="KW-0808">Transferase</keyword>
<keyword id="KW-0809">Transit peptide</keyword>
<proteinExistence type="evidence at transcript level"/>
<comment type="function">
    <text evidence="1 2">Catalyzes the first reaction in the catabolism of the essential branched chain amino acids leucine, isoleucine, and valine (By similarity). May also function as a transporter of branched chain alpha-keto acids (By similarity).</text>
</comment>
<comment type="catalytic activity">
    <reaction evidence="1">
        <text>L-leucine + 2-oxoglutarate = 4-methyl-2-oxopentanoate + L-glutamate</text>
        <dbReference type="Rhea" id="RHEA:18321"/>
        <dbReference type="ChEBI" id="CHEBI:16810"/>
        <dbReference type="ChEBI" id="CHEBI:17865"/>
        <dbReference type="ChEBI" id="CHEBI:29985"/>
        <dbReference type="ChEBI" id="CHEBI:57427"/>
        <dbReference type="EC" id="2.6.1.42"/>
    </reaction>
</comment>
<comment type="catalytic activity">
    <reaction evidence="1">
        <text>L-isoleucine + 2-oxoglutarate = (S)-3-methyl-2-oxopentanoate + L-glutamate</text>
        <dbReference type="Rhea" id="RHEA:24801"/>
        <dbReference type="ChEBI" id="CHEBI:16810"/>
        <dbReference type="ChEBI" id="CHEBI:29985"/>
        <dbReference type="ChEBI" id="CHEBI:35146"/>
        <dbReference type="ChEBI" id="CHEBI:58045"/>
        <dbReference type="EC" id="2.6.1.42"/>
    </reaction>
</comment>
<comment type="catalytic activity">
    <reaction evidence="1">
        <text>L-valine + 2-oxoglutarate = 3-methyl-2-oxobutanoate + L-glutamate</text>
        <dbReference type="Rhea" id="RHEA:24813"/>
        <dbReference type="ChEBI" id="CHEBI:11851"/>
        <dbReference type="ChEBI" id="CHEBI:16810"/>
        <dbReference type="ChEBI" id="CHEBI:29985"/>
        <dbReference type="ChEBI" id="CHEBI:57762"/>
        <dbReference type="EC" id="2.6.1.42"/>
    </reaction>
</comment>
<comment type="cofactor">
    <cofactor evidence="1">
        <name>pyridoxal 5'-phosphate</name>
        <dbReference type="ChEBI" id="CHEBI:597326"/>
    </cofactor>
</comment>
<comment type="subunit">
    <text evidence="1">Homodimer.</text>
</comment>
<comment type="subcellular location">
    <subcellularLocation>
        <location evidence="2">Mitochondrion</location>
    </subcellularLocation>
</comment>
<comment type="similarity">
    <text evidence="3">Belongs to the class-IV pyridoxal-phosphate-dependent aminotransferase family.</text>
</comment>
<organism>
    <name type="scientific">Bos taurus</name>
    <name type="common">Bovine</name>
    <dbReference type="NCBI Taxonomy" id="9913"/>
    <lineage>
        <taxon>Eukaryota</taxon>
        <taxon>Metazoa</taxon>
        <taxon>Chordata</taxon>
        <taxon>Craniata</taxon>
        <taxon>Vertebrata</taxon>
        <taxon>Euteleostomi</taxon>
        <taxon>Mammalia</taxon>
        <taxon>Eutheria</taxon>
        <taxon>Laurasiatheria</taxon>
        <taxon>Artiodactyla</taxon>
        <taxon>Ruminantia</taxon>
        <taxon>Pecora</taxon>
        <taxon>Bovidae</taxon>
        <taxon>Bovinae</taxon>
        <taxon>Bos</taxon>
    </lineage>
</organism>
<protein>
    <recommendedName>
        <fullName>Branched-chain-amino-acid aminotransferase, mitochondrial</fullName>
        <shortName>BCAT(m)</shortName>
        <ecNumber evidence="1">2.6.1.42</ecNumber>
    </recommendedName>
</protein>
<sequence length="393" mass="44648">MATAALRQIWIPRFLPVPWFLCGSRRYASSSFKAADLQLEMTQEPHKKPDPSQPLLFGKTFTDHMLMVEWNQEKGWGQPRIQPFQNLTLHPACSALHYSLQLFEGMKAFKGGDQRVRLFRPWLNMERMLRSALRLCLPSFDKIELLECIRRLVEVDQDWVPGSMGTSLYVRPVLIGNEPSLGVGHPTRALLFVILSPVGAYFPGDALKPVSLLADPSFIRAWVGGVGNYKLGGNYGPTVLVQQEAQKKGCEQVLWLYGPDHELTEVGTMNIFVFWTYEDGVLELVTPPLDGIILPGIVRQSLLDLARTWGEFRVVERKITMKEFLRALKDGRVREVFGSGTACQVCPVHQILYQGKHFHIPTMENGPQLILRFHKELKAIQYGSKAHEWMLPV</sequence>
<dbReference type="EC" id="2.6.1.42" evidence="1"/>
<dbReference type="EMBL" id="BT020729">
    <property type="protein sequence ID" value="AAX08746.1"/>
    <property type="molecule type" value="mRNA"/>
</dbReference>
<dbReference type="EMBL" id="BT021163">
    <property type="protein sequence ID" value="AAX31345.1"/>
    <property type="molecule type" value="mRNA"/>
</dbReference>
<dbReference type="EMBL" id="BT026175">
    <property type="protein sequence ID" value="ABG67014.1"/>
    <property type="molecule type" value="mRNA"/>
</dbReference>
<dbReference type="EMBL" id="BC114055">
    <property type="protein sequence ID" value="AAI14056.1"/>
    <property type="molecule type" value="mRNA"/>
</dbReference>
<dbReference type="RefSeq" id="NP_001013611.2">
    <property type="nucleotide sequence ID" value="NM_001013593.2"/>
</dbReference>
<dbReference type="SMR" id="Q5EA40"/>
<dbReference type="FunCoup" id="Q5EA40">
    <property type="interactions" value="1615"/>
</dbReference>
<dbReference type="STRING" id="9913.ENSBTAP00000072032"/>
<dbReference type="PaxDb" id="9913-ENSBTAP00000031858"/>
<dbReference type="GeneID" id="281643"/>
<dbReference type="KEGG" id="bta:281643"/>
<dbReference type="CTD" id="587"/>
<dbReference type="VEuPathDB" id="HostDB:ENSBTAG00000009172"/>
<dbReference type="eggNOG" id="KOG0975">
    <property type="taxonomic scope" value="Eukaryota"/>
</dbReference>
<dbReference type="HOGENOM" id="CLU_031922_0_3_1"/>
<dbReference type="InParanoid" id="Q5EA40"/>
<dbReference type="OMA" id="LTEVFAC"/>
<dbReference type="OrthoDB" id="1732691at2759"/>
<dbReference type="TreeFam" id="TF300882"/>
<dbReference type="Reactome" id="R-BTA-70895">
    <property type="pathway name" value="Branched-chain amino acid catabolism"/>
</dbReference>
<dbReference type="Proteomes" id="UP000009136">
    <property type="component" value="Chromosome 18"/>
</dbReference>
<dbReference type="Bgee" id="ENSBTAG00000009172">
    <property type="expression patterns" value="Expressed in diaphragm and 105 other cell types or tissues"/>
</dbReference>
<dbReference type="GO" id="GO:0005739">
    <property type="term" value="C:mitochondrion"/>
    <property type="evidence" value="ECO:0000318"/>
    <property type="project" value="GO_Central"/>
</dbReference>
<dbReference type="GO" id="GO:0004084">
    <property type="term" value="F:branched-chain-amino-acid transaminase activity"/>
    <property type="evidence" value="ECO:0000318"/>
    <property type="project" value="GO_Central"/>
</dbReference>
<dbReference type="GO" id="GO:0052656">
    <property type="term" value="F:L-isoleucine-2-oxoglutarate transaminase activity"/>
    <property type="evidence" value="ECO:0007669"/>
    <property type="project" value="RHEA"/>
</dbReference>
<dbReference type="GO" id="GO:0052654">
    <property type="term" value="F:L-leucine-2-oxoglutarate transaminase activity"/>
    <property type="evidence" value="ECO:0007669"/>
    <property type="project" value="RHEA"/>
</dbReference>
<dbReference type="GO" id="GO:0052655">
    <property type="term" value="F:L-valine-2-oxoglutarate transaminase activity"/>
    <property type="evidence" value="ECO:0007669"/>
    <property type="project" value="RHEA"/>
</dbReference>
<dbReference type="GO" id="GO:0009098">
    <property type="term" value="P:L-leucine biosynthetic process"/>
    <property type="evidence" value="ECO:0000318"/>
    <property type="project" value="GO_Central"/>
</dbReference>
<dbReference type="GO" id="GO:0009099">
    <property type="term" value="P:L-valine biosynthetic process"/>
    <property type="evidence" value="ECO:0000318"/>
    <property type="project" value="GO_Central"/>
</dbReference>
<dbReference type="GO" id="GO:0006629">
    <property type="term" value="P:lipid metabolic process"/>
    <property type="evidence" value="ECO:0007669"/>
    <property type="project" value="UniProtKB-KW"/>
</dbReference>
<dbReference type="CDD" id="cd01557">
    <property type="entry name" value="BCAT_beta_family"/>
    <property type="match status" value="1"/>
</dbReference>
<dbReference type="FunFam" id="3.30.470.10:FF:000002">
    <property type="entry name" value="Branched-chain-amino-acid aminotransferase"/>
    <property type="match status" value="1"/>
</dbReference>
<dbReference type="FunFam" id="3.20.10.10:FF:000007">
    <property type="entry name" value="Branched-chain-amino-acid aminotransferase, mitochondrial"/>
    <property type="match status" value="1"/>
</dbReference>
<dbReference type="Gene3D" id="3.30.470.10">
    <property type="match status" value="1"/>
</dbReference>
<dbReference type="Gene3D" id="3.20.10.10">
    <property type="entry name" value="D-amino Acid Aminotransferase, subunit A, domain 2"/>
    <property type="match status" value="1"/>
</dbReference>
<dbReference type="InterPro" id="IPR001544">
    <property type="entry name" value="Aminotrans_IV"/>
</dbReference>
<dbReference type="InterPro" id="IPR018300">
    <property type="entry name" value="Aminotrans_IV_CS"/>
</dbReference>
<dbReference type="InterPro" id="IPR036038">
    <property type="entry name" value="Aminotransferase-like"/>
</dbReference>
<dbReference type="InterPro" id="IPR005786">
    <property type="entry name" value="B_amino_transII"/>
</dbReference>
<dbReference type="InterPro" id="IPR043132">
    <property type="entry name" value="BCAT-like_C"/>
</dbReference>
<dbReference type="InterPro" id="IPR043131">
    <property type="entry name" value="BCAT-like_N"/>
</dbReference>
<dbReference type="InterPro" id="IPR033939">
    <property type="entry name" value="BCAT_family"/>
</dbReference>
<dbReference type="NCBIfam" id="TIGR01123">
    <property type="entry name" value="ilvE_II"/>
    <property type="match status" value="1"/>
</dbReference>
<dbReference type="NCBIfam" id="NF009897">
    <property type="entry name" value="PRK13357.1"/>
    <property type="match status" value="1"/>
</dbReference>
<dbReference type="PANTHER" id="PTHR11825:SF39">
    <property type="entry name" value="BRANCHED-CHAIN-AMINO-ACID AMINOTRANSFERASE, MITOCHONDRIAL"/>
    <property type="match status" value="1"/>
</dbReference>
<dbReference type="PANTHER" id="PTHR11825">
    <property type="entry name" value="SUBGROUP IIII AMINOTRANSFERASE"/>
    <property type="match status" value="1"/>
</dbReference>
<dbReference type="Pfam" id="PF01063">
    <property type="entry name" value="Aminotran_4"/>
    <property type="match status" value="1"/>
</dbReference>
<dbReference type="PIRSF" id="PIRSF006468">
    <property type="entry name" value="BCAT1"/>
    <property type="match status" value="1"/>
</dbReference>
<dbReference type="SUPFAM" id="SSF56752">
    <property type="entry name" value="D-aminoacid aminotransferase-like PLP-dependent enzymes"/>
    <property type="match status" value="1"/>
</dbReference>
<dbReference type="PROSITE" id="PS00770">
    <property type="entry name" value="AA_TRANSFER_CLASS_4"/>
    <property type="match status" value="1"/>
</dbReference>
<gene>
    <name type="primary">BCAT2</name>
</gene>
<reference key="1">
    <citation type="journal article" date="2005" name="BMC Genomics">
        <title>Characterization of 954 bovine full-CDS cDNA sequences.</title>
        <authorList>
            <person name="Harhay G.P."/>
            <person name="Sonstegard T.S."/>
            <person name="Keele J.W."/>
            <person name="Heaton M.P."/>
            <person name="Clawson M.L."/>
            <person name="Snelling W.M."/>
            <person name="Wiedmann R.T."/>
            <person name="Van Tassell C.P."/>
            <person name="Smith T.P.L."/>
        </authorList>
    </citation>
    <scope>NUCLEOTIDE SEQUENCE [LARGE SCALE MRNA]</scope>
</reference>
<reference key="2">
    <citation type="submission" date="2006-02" db="EMBL/GenBank/DDBJ databases">
        <authorList>
            <consortium name="NIH - Mammalian Gene Collection (MGC) project"/>
        </authorList>
    </citation>
    <scope>NUCLEOTIDE SEQUENCE [LARGE SCALE MRNA]</scope>
    <source>
        <strain>Hereford</strain>
        <tissue>Testis</tissue>
    </source>
</reference>